<name>SCAM5_ARATH</name>
<sequence>MGGRYDRNTFDEQDEVNPFANPGSVPAASNSRLSPLPPEPAGFGYGRTVDIPLDRPGSGAQDLKKKEKELQAKEADLRRREQDLKRKQDAAARAGIVIEAKNWPTFFPLIHHDIANEILVRLQRLQYIAFATYLGLVLALFWNIIAVTTAWIKGEGVTIWLLAVIYFISGVPGGYVLWYRPLYRAFRSDSAFNFGWFFLFYMLHILFCLFAAVAPPIVFKGKSLAGILPAIDVLSAQALVGIFYFIGFGLFCLESVVSIWVIQQVYMYFRGSGKADDMRRDAARGAMRAAI</sequence>
<keyword id="KW-0025">Alternative splicing</keyword>
<keyword id="KW-1003">Cell membrane</keyword>
<keyword id="KW-0175">Coiled coil</keyword>
<keyword id="KW-0968">Cytoplasmic vesicle</keyword>
<keyword id="KW-0472">Membrane</keyword>
<keyword id="KW-0597">Phosphoprotein</keyword>
<keyword id="KW-1185">Reference proteome</keyword>
<keyword id="KW-0812">Transmembrane</keyword>
<keyword id="KW-1133">Transmembrane helix</keyword>
<keyword id="KW-0813">Transport</keyword>
<feature type="chain" id="PRO_0000304904" description="Secretory carrier-associated membrane protein 5">
    <location>
        <begin position="1"/>
        <end position="291"/>
    </location>
</feature>
<feature type="topological domain" description="Cytoplasmic" evidence="3">
    <location>
        <begin position="1"/>
        <end position="126"/>
    </location>
</feature>
<feature type="transmembrane region" description="Helical" evidence="3">
    <location>
        <begin position="127"/>
        <end position="147"/>
    </location>
</feature>
<feature type="transmembrane region" description="Helical" evidence="3">
    <location>
        <begin position="159"/>
        <end position="179"/>
    </location>
</feature>
<feature type="transmembrane region" description="Helical" evidence="3">
    <location>
        <begin position="194"/>
        <end position="214"/>
    </location>
</feature>
<feature type="transmembrane region" description="Helical" evidence="3">
    <location>
        <begin position="242"/>
        <end position="262"/>
    </location>
</feature>
<feature type="topological domain" description="Cytoplasmic" evidence="3">
    <location>
        <begin position="263"/>
        <end position="288"/>
    </location>
</feature>
<feature type="region of interest" description="Disordered" evidence="4">
    <location>
        <begin position="1"/>
        <end position="66"/>
    </location>
</feature>
<feature type="coiled-coil region" evidence="3">
    <location>
        <begin position="58"/>
        <end position="94"/>
    </location>
</feature>
<feature type="compositionally biased region" description="Basic and acidic residues" evidence="4">
    <location>
        <begin position="1"/>
        <end position="10"/>
    </location>
</feature>
<feature type="modified residue" description="Phosphoserine" evidence="2">
    <location>
        <position position="34"/>
    </location>
</feature>
<proteinExistence type="evidence at transcript level"/>
<protein>
    <recommendedName>
        <fullName>Secretory carrier-associated membrane protein 5</fullName>
        <shortName>Secretory carrier membrane protein 5</shortName>
    </recommendedName>
</protein>
<accession>Q9SXA5</accession>
<gene>
    <name type="primary">SCAMP5</name>
    <name type="ordered locus">At1g11180</name>
    <name type="ORF">T28P6.15</name>
</gene>
<reference key="1">
    <citation type="journal article" date="2000" name="Nature">
        <title>Sequence and analysis of chromosome 1 of the plant Arabidopsis thaliana.</title>
        <authorList>
            <person name="Theologis A."/>
            <person name="Ecker J.R."/>
            <person name="Palm C.J."/>
            <person name="Federspiel N.A."/>
            <person name="Kaul S."/>
            <person name="White O."/>
            <person name="Alonso J."/>
            <person name="Altafi H."/>
            <person name="Araujo R."/>
            <person name="Bowman C.L."/>
            <person name="Brooks S.Y."/>
            <person name="Buehler E."/>
            <person name="Chan A."/>
            <person name="Chao Q."/>
            <person name="Chen H."/>
            <person name="Cheuk R.F."/>
            <person name="Chin C.W."/>
            <person name="Chung M.K."/>
            <person name="Conn L."/>
            <person name="Conway A.B."/>
            <person name="Conway A.R."/>
            <person name="Creasy T.H."/>
            <person name="Dewar K."/>
            <person name="Dunn P."/>
            <person name="Etgu P."/>
            <person name="Feldblyum T.V."/>
            <person name="Feng J.-D."/>
            <person name="Fong B."/>
            <person name="Fujii C.Y."/>
            <person name="Gill J.E."/>
            <person name="Goldsmith A.D."/>
            <person name="Haas B."/>
            <person name="Hansen N.F."/>
            <person name="Hughes B."/>
            <person name="Huizar L."/>
            <person name="Hunter J.L."/>
            <person name="Jenkins J."/>
            <person name="Johnson-Hopson C."/>
            <person name="Khan S."/>
            <person name="Khaykin E."/>
            <person name="Kim C.J."/>
            <person name="Koo H.L."/>
            <person name="Kremenetskaia I."/>
            <person name="Kurtz D.B."/>
            <person name="Kwan A."/>
            <person name="Lam B."/>
            <person name="Langin-Hooper S."/>
            <person name="Lee A."/>
            <person name="Lee J.M."/>
            <person name="Lenz C.A."/>
            <person name="Li J.H."/>
            <person name="Li Y.-P."/>
            <person name="Lin X."/>
            <person name="Liu S.X."/>
            <person name="Liu Z.A."/>
            <person name="Luros J.S."/>
            <person name="Maiti R."/>
            <person name="Marziali A."/>
            <person name="Militscher J."/>
            <person name="Miranda M."/>
            <person name="Nguyen M."/>
            <person name="Nierman W.C."/>
            <person name="Osborne B.I."/>
            <person name="Pai G."/>
            <person name="Peterson J."/>
            <person name="Pham P.K."/>
            <person name="Rizzo M."/>
            <person name="Rooney T."/>
            <person name="Rowley D."/>
            <person name="Sakano H."/>
            <person name="Salzberg S.L."/>
            <person name="Schwartz J.R."/>
            <person name="Shinn P."/>
            <person name="Southwick A.M."/>
            <person name="Sun H."/>
            <person name="Tallon L.J."/>
            <person name="Tambunga G."/>
            <person name="Toriumi M.J."/>
            <person name="Town C.D."/>
            <person name="Utterback T."/>
            <person name="Van Aken S."/>
            <person name="Vaysberg M."/>
            <person name="Vysotskaia V.S."/>
            <person name="Walker M."/>
            <person name="Wu D."/>
            <person name="Yu G."/>
            <person name="Fraser C.M."/>
            <person name="Venter J.C."/>
            <person name="Davis R.W."/>
        </authorList>
    </citation>
    <scope>NUCLEOTIDE SEQUENCE [LARGE SCALE GENOMIC DNA]</scope>
    <source>
        <strain>cv. Columbia</strain>
    </source>
</reference>
<reference key="2">
    <citation type="journal article" date="2017" name="Plant J.">
        <title>Araport11: a complete reannotation of the Arabidopsis thaliana reference genome.</title>
        <authorList>
            <person name="Cheng C.Y."/>
            <person name="Krishnakumar V."/>
            <person name="Chan A.P."/>
            <person name="Thibaud-Nissen F."/>
            <person name="Schobel S."/>
            <person name="Town C.D."/>
        </authorList>
    </citation>
    <scope>GENOME REANNOTATION</scope>
    <source>
        <strain>cv. Columbia</strain>
    </source>
</reference>
<reference key="3">
    <citation type="journal article" date="2004" name="Genome Res.">
        <title>Whole genome sequence comparisons and 'full-length' cDNA sequences: a combined approach to evaluate and improve Arabidopsis genome annotation.</title>
        <authorList>
            <person name="Castelli V."/>
            <person name="Aury J.-M."/>
            <person name="Jaillon O."/>
            <person name="Wincker P."/>
            <person name="Clepet C."/>
            <person name="Menard M."/>
            <person name="Cruaud C."/>
            <person name="Quetier F."/>
            <person name="Scarpelli C."/>
            <person name="Schaechter V."/>
            <person name="Temple G."/>
            <person name="Caboche M."/>
            <person name="Weissenbach J."/>
            <person name="Salanoubat M."/>
        </authorList>
    </citation>
    <scope>NUCLEOTIDE SEQUENCE [LARGE SCALE MRNA]</scope>
    <source>
        <strain>cv. Columbia</strain>
    </source>
</reference>
<organism>
    <name type="scientific">Arabidopsis thaliana</name>
    <name type="common">Mouse-ear cress</name>
    <dbReference type="NCBI Taxonomy" id="3702"/>
    <lineage>
        <taxon>Eukaryota</taxon>
        <taxon>Viridiplantae</taxon>
        <taxon>Streptophyta</taxon>
        <taxon>Embryophyta</taxon>
        <taxon>Tracheophyta</taxon>
        <taxon>Spermatophyta</taxon>
        <taxon>Magnoliopsida</taxon>
        <taxon>eudicotyledons</taxon>
        <taxon>Gunneridae</taxon>
        <taxon>Pentapetalae</taxon>
        <taxon>rosids</taxon>
        <taxon>malvids</taxon>
        <taxon>Brassicales</taxon>
        <taxon>Brassicaceae</taxon>
        <taxon>Camelineae</taxon>
        <taxon>Arabidopsis</taxon>
    </lineage>
</organism>
<evidence type="ECO:0000250" key="1"/>
<evidence type="ECO:0000250" key="2">
    <source>
        <dbReference type="UniProtKB" id="Q9M5P2"/>
    </source>
</evidence>
<evidence type="ECO:0000255" key="3"/>
<evidence type="ECO:0000256" key="4">
    <source>
        <dbReference type="SAM" id="MobiDB-lite"/>
    </source>
</evidence>
<evidence type="ECO:0000305" key="5"/>
<dbReference type="EMBL" id="AC007259">
    <property type="protein sequence ID" value="AAD49997.1"/>
    <property type="status" value="ALT_SEQ"/>
    <property type="molecule type" value="Genomic_DNA"/>
</dbReference>
<dbReference type="EMBL" id="CP002684">
    <property type="protein sequence ID" value="AEE28695.1"/>
    <property type="molecule type" value="Genomic_DNA"/>
</dbReference>
<dbReference type="EMBL" id="BX817123">
    <property type="status" value="NOT_ANNOTATED_CDS"/>
    <property type="molecule type" value="mRNA"/>
</dbReference>
<dbReference type="PIR" id="G86245">
    <property type="entry name" value="G86245"/>
</dbReference>
<dbReference type="RefSeq" id="NP_172584.1">
    <molecule id="Q9SXA5-1"/>
    <property type="nucleotide sequence ID" value="NM_100990.4"/>
</dbReference>
<dbReference type="SMR" id="Q9SXA5"/>
<dbReference type="BioGRID" id="22899">
    <property type="interactions" value="1"/>
</dbReference>
<dbReference type="FunCoup" id="Q9SXA5">
    <property type="interactions" value="2007"/>
</dbReference>
<dbReference type="STRING" id="3702.Q9SXA5"/>
<dbReference type="iPTMnet" id="Q9SXA5"/>
<dbReference type="PaxDb" id="3702-AT1G11180.2"/>
<dbReference type="EnsemblPlants" id="AT1G11180.1">
    <molecule id="Q9SXA5-1"/>
    <property type="protein sequence ID" value="AT1G11180.1"/>
    <property type="gene ID" value="AT1G11180"/>
</dbReference>
<dbReference type="GeneID" id="837659"/>
<dbReference type="Gramene" id="AT1G11180.1">
    <molecule id="Q9SXA5-1"/>
    <property type="protein sequence ID" value="AT1G11180.1"/>
    <property type="gene ID" value="AT1G11180"/>
</dbReference>
<dbReference type="KEGG" id="ath:AT1G11180"/>
<dbReference type="Araport" id="AT1G11180"/>
<dbReference type="TAIR" id="AT1G11180">
    <property type="gene designation" value="SCAMP2"/>
</dbReference>
<dbReference type="eggNOG" id="KOG3088">
    <property type="taxonomic scope" value="Eukaryota"/>
</dbReference>
<dbReference type="HOGENOM" id="CLU_066546_3_0_1"/>
<dbReference type="InParanoid" id="Q9SXA5"/>
<dbReference type="OMA" id="CLAWFTG"/>
<dbReference type="PhylomeDB" id="Q9SXA5"/>
<dbReference type="PRO" id="PR:Q9SXA5"/>
<dbReference type="Proteomes" id="UP000006548">
    <property type="component" value="Chromosome 1"/>
</dbReference>
<dbReference type="ExpressionAtlas" id="Q9SXA5">
    <property type="expression patterns" value="baseline and differential"/>
</dbReference>
<dbReference type="GO" id="GO:0005886">
    <property type="term" value="C:plasma membrane"/>
    <property type="evidence" value="ECO:0007669"/>
    <property type="project" value="UniProtKB-SubCell"/>
</dbReference>
<dbReference type="GO" id="GO:0030658">
    <property type="term" value="C:transport vesicle membrane"/>
    <property type="evidence" value="ECO:0007669"/>
    <property type="project" value="UniProtKB-SubCell"/>
</dbReference>
<dbReference type="GO" id="GO:0015031">
    <property type="term" value="P:protein transport"/>
    <property type="evidence" value="ECO:0007669"/>
    <property type="project" value="InterPro"/>
</dbReference>
<dbReference type="InterPro" id="IPR007273">
    <property type="entry name" value="SCAMP"/>
</dbReference>
<dbReference type="PANTHER" id="PTHR10687:SF75">
    <property type="entry name" value="SECRETORY CARRIER-ASSOCIATED MEMBRANE PROTEIN 5"/>
    <property type="match status" value="1"/>
</dbReference>
<dbReference type="PANTHER" id="PTHR10687">
    <property type="entry name" value="SECRETORY CARRIER-ASSOCIATED MEMBRANE PROTEIN SCAMP"/>
    <property type="match status" value="1"/>
</dbReference>
<dbReference type="Pfam" id="PF04144">
    <property type="entry name" value="SCAMP"/>
    <property type="match status" value="1"/>
</dbReference>
<comment type="function">
    <text evidence="1">Probably involved in membrane trafficking.</text>
</comment>
<comment type="subcellular location">
    <subcellularLocation>
        <location evidence="1">Cell membrane</location>
        <topology evidence="1">Multi-pass membrane protein</topology>
    </subcellularLocation>
    <subcellularLocation>
        <location evidence="1">Cytoplasmic vesicle</location>
        <location evidence="1">Secretory vesicle membrane</location>
        <topology evidence="1">Multi-pass membrane protein</topology>
    </subcellularLocation>
</comment>
<comment type="alternative products">
    <event type="alternative splicing"/>
    <isoform>
        <id>Q9SXA5-1</id>
        <name>1</name>
        <sequence type="displayed"/>
    </isoform>
    <text>A number of isoforms are produced. According to EST sequences.</text>
</comment>
<comment type="similarity">
    <text evidence="5">Belongs to the SCAMP family.</text>
</comment>
<comment type="sequence caution" evidence="5">
    <conflict type="erroneous gene model prediction">
        <sequence resource="EMBL-CDS" id="AAD49997"/>
    </conflict>
</comment>
<comment type="sequence caution" evidence="5">
    <conflict type="frameshift">
        <sequence resource="EMBL" id="BX817123"/>
    </conflict>
</comment>